<gene>
    <name type="primary">Trit1</name>
    <name type="synonym">Ipt</name>
</gene>
<organism>
    <name type="scientific">Mus musculus</name>
    <name type="common">Mouse</name>
    <dbReference type="NCBI Taxonomy" id="10090"/>
    <lineage>
        <taxon>Eukaryota</taxon>
        <taxon>Metazoa</taxon>
        <taxon>Chordata</taxon>
        <taxon>Craniata</taxon>
        <taxon>Vertebrata</taxon>
        <taxon>Euteleostomi</taxon>
        <taxon>Mammalia</taxon>
        <taxon>Eutheria</taxon>
        <taxon>Euarchontoglires</taxon>
        <taxon>Glires</taxon>
        <taxon>Rodentia</taxon>
        <taxon>Myomorpha</taxon>
        <taxon>Muroidea</taxon>
        <taxon>Muridae</taxon>
        <taxon>Murinae</taxon>
        <taxon>Mus</taxon>
        <taxon>Mus</taxon>
    </lineage>
</organism>
<accession>Q80UN9</accession>
<accession>B1ARS6</accession>
<accession>Q9D1H5</accession>
<dbReference type="EC" id="2.5.1.75" evidence="2"/>
<dbReference type="EMBL" id="AK003556">
    <property type="protein sequence ID" value="BAB22853.2"/>
    <property type="molecule type" value="mRNA"/>
</dbReference>
<dbReference type="EMBL" id="AL606906">
    <property type="status" value="NOT_ANNOTATED_CDS"/>
    <property type="molecule type" value="Genomic_DNA"/>
</dbReference>
<dbReference type="EMBL" id="BC019812">
    <property type="protein sequence ID" value="AAH19812.1"/>
    <property type="molecule type" value="mRNA"/>
</dbReference>
<dbReference type="EMBL" id="BC051040">
    <property type="protein sequence ID" value="AAH51040.1"/>
    <property type="molecule type" value="mRNA"/>
</dbReference>
<dbReference type="CCDS" id="CCDS18607.1">
    <molecule id="Q80UN9-1"/>
</dbReference>
<dbReference type="RefSeq" id="NP_080149.2">
    <molecule id="Q80UN9-1"/>
    <property type="nucleotide sequence ID" value="NM_025873.2"/>
</dbReference>
<dbReference type="SMR" id="Q80UN9"/>
<dbReference type="FunCoup" id="Q80UN9">
    <property type="interactions" value="3084"/>
</dbReference>
<dbReference type="STRING" id="10090.ENSMUSP00000099709"/>
<dbReference type="iPTMnet" id="Q80UN9"/>
<dbReference type="PhosphoSitePlus" id="Q80UN9"/>
<dbReference type="PaxDb" id="10090-ENSMUSP00000099709"/>
<dbReference type="PeptideAtlas" id="Q80UN9"/>
<dbReference type="ProteomicsDB" id="290092">
    <molecule id="Q80UN9-1"/>
</dbReference>
<dbReference type="ProteomicsDB" id="290093">
    <molecule id="Q80UN9-2"/>
</dbReference>
<dbReference type="Pumba" id="Q80UN9"/>
<dbReference type="Antibodypedia" id="17887">
    <property type="antibodies" value="131 antibodies from 23 providers"/>
</dbReference>
<dbReference type="DNASU" id="66966"/>
<dbReference type="Ensembl" id="ENSMUST00000102649.4">
    <molecule id="Q80UN9-1"/>
    <property type="protein sequence ID" value="ENSMUSP00000099709.4"/>
    <property type="gene ID" value="ENSMUSG00000028653.17"/>
</dbReference>
<dbReference type="GeneID" id="66966"/>
<dbReference type="KEGG" id="mmu:66966"/>
<dbReference type="UCSC" id="uc008uor.1">
    <molecule id="Q80UN9-1"/>
    <property type="organism name" value="mouse"/>
</dbReference>
<dbReference type="AGR" id="MGI:1914216"/>
<dbReference type="CTD" id="54802"/>
<dbReference type="MGI" id="MGI:1914216">
    <property type="gene designation" value="Trit1"/>
</dbReference>
<dbReference type="VEuPathDB" id="HostDB:ENSMUSG00000028653"/>
<dbReference type="eggNOG" id="KOG1384">
    <property type="taxonomic scope" value="Eukaryota"/>
</dbReference>
<dbReference type="GeneTree" id="ENSGT00390000015214"/>
<dbReference type="HOGENOM" id="CLU_032616_2_1_1"/>
<dbReference type="InParanoid" id="Q80UN9"/>
<dbReference type="OMA" id="WGLHLKS"/>
<dbReference type="OrthoDB" id="775260at2759"/>
<dbReference type="PhylomeDB" id="Q80UN9"/>
<dbReference type="TreeFam" id="TF315069"/>
<dbReference type="BRENDA" id="2.5.1.75">
    <property type="organism ID" value="3474"/>
</dbReference>
<dbReference type="BioGRID-ORCS" id="66966">
    <property type="hits" value="16 hits in 80 CRISPR screens"/>
</dbReference>
<dbReference type="ChiTaRS" id="Trit1">
    <property type="organism name" value="mouse"/>
</dbReference>
<dbReference type="PRO" id="PR:Q80UN9"/>
<dbReference type="Proteomes" id="UP000000589">
    <property type="component" value="Chromosome 4"/>
</dbReference>
<dbReference type="RNAct" id="Q80UN9">
    <property type="molecule type" value="protein"/>
</dbReference>
<dbReference type="Bgee" id="ENSMUSG00000028653">
    <property type="expression patterns" value="Expressed in saccule of membranous labyrinth and 265 other cell types or tissues"/>
</dbReference>
<dbReference type="GO" id="GO:0005739">
    <property type="term" value="C:mitochondrion"/>
    <property type="evidence" value="ECO:0007005"/>
    <property type="project" value="MGI"/>
</dbReference>
<dbReference type="GO" id="GO:0005634">
    <property type="term" value="C:nucleus"/>
    <property type="evidence" value="ECO:0007669"/>
    <property type="project" value="UniProtKB-SubCell"/>
</dbReference>
<dbReference type="GO" id="GO:0005524">
    <property type="term" value="F:ATP binding"/>
    <property type="evidence" value="ECO:0007669"/>
    <property type="project" value="UniProtKB-KW"/>
</dbReference>
<dbReference type="GO" id="GO:0052381">
    <property type="term" value="F:tRNA dimethylallyltransferase activity"/>
    <property type="evidence" value="ECO:0000314"/>
    <property type="project" value="UniProtKB"/>
</dbReference>
<dbReference type="GO" id="GO:0008270">
    <property type="term" value="F:zinc ion binding"/>
    <property type="evidence" value="ECO:0007669"/>
    <property type="project" value="UniProtKB-KW"/>
</dbReference>
<dbReference type="GO" id="GO:0070900">
    <property type="term" value="P:mitochondrial tRNA modification"/>
    <property type="evidence" value="ECO:0000250"/>
    <property type="project" value="UniProtKB"/>
</dbReference>
<dbReference type="GO" id="GO:0006400">
    <property type="term" value="P:tRNA modification"/>
    <property type="evidence" value="ECO:0000314"/>
    <property type="project" value="UniProtKB"/>
</dbReference>
<dbReference type="CDD" id="cd02019">
    <property type="entry name" value="NK"/>
    <property type="match status" value="1"/>
</dbReference>
<dbReference type="FunFam" id="3.40.50.300:FF:005017">
    <property type="entry name" value="tRNA delta(2)-isopentenylpyrophosphate transferase, putative"/>
    <property type="match status" value="1"/>
</dbReference>
<dbReference type="FunFam" id="1.10.20.140:FF:000002">
    <property type="entry name" value="tRNA dimethylallyltransferase, mitochondrial"/>
    <property type="match status" value="1"/>
</dbReference>
<dbReference type="Gene3D" id="1.10.20.140">
    <property type="match status" value="1"/>
</dbReference>
<dbReference type="Gene3D" id="3.30.160.60">
    <property type="entry name" value="Classic Zinc Finger"/>
    <property type="match status" value="1"/>
</dbReference>
<dbReference type="Gene3D" id="3.40.50.300">
    <property type="entry name" value="P-loop containing nucleotide triphosphate hydrolases"/>
    <property type="match status" value="1"/>
</dbReference>
<dbReference type="HAMAP" id="MF_00185">
    <property type="entry name" value="IPP_trans"/>
    <property type="match status" value="1"/>
</dbReference>
<dbReference type="InterPro" id="IPR039657">
    <property type="entry name" value="Dimethylallyltransferase"/>
</dbReference>
<dbReference type="InterPro" id="IPR030666">
    <property type="entry name" value="IPP_transferase_euk"/>
</dbReference>
<dbReference type="InterPro" id="IPR018022">
    <property type="entry name" value="IPT"/>
</dbReference>
<dbReference type="InterPro" id="IPR027417">
    <property type="entry name" value="P-loop_NTPase"/>
</dbReference>
<dbReference type="InterPro" id="IPR022755">
    <property type="entry name" value="Znf_C2H2_jaz"/>
</dbReference>
<dbReference type="InterPro" id="IPR036236">
    <property type="entry name" value="Znf_C2H2_sf"/>
</dbReference>
<dbReference type="NCBIfam" id="TIGR00174">
    <property type="entry name" value="miaA"/>
    <property type="match status" value="1"/>
</dbReference>
<dbReference type="PANTHER" id="PTHR11088">
    <property type="entry name" value="TRNA DIMETHYLALLYLTRANSFERASE"/>
    <property type="match status" value="1"/>
</dbReference>
<dbReference type="PANTHER" id="PTHR11088:SF89">
    <property type="entry name" value="TRNA DIMETHYLALLYLTRANSFERASE"/>
    <property type="match status" value="1"/>
</dbReference>
<dbReference type="Pfam" id="PF01715">
    <property type="entry name" value="IPPT"/>
    <property type="match status" value="1"/>
</dbReference>
<dbReference type="Pfam" id="PF12171">
    <property type="entry name" value="zf-C2H2_jaz"/>
    <property type="match status" value="1"/>
</dbReference>
<dbReference type="PIRSF" id="PIRSF039110">
    <property type="entry name" value="IPP_transferase"/>
    <property type="match status" value="1"/>
</dbReference>
<dbReference type="SUPFAM" id="SSF57667">
    <property type="entry name" value="beta-beta-alpha zinc fingers"/>
    <property type="match status" value="1"/>
</dbReference>
<dbReference type="SUPFAM" id="SSF52540">
    <property type="entry name" value="P-loop containing nucleoside triphosphate hydrolases"/>
    <property type="match status" value="1"/>
</dbReference>
<evidence type="ECO:0000250" key="1">
    <source>
        <dbReference type="UniProtKB" id="P07884"/>
    </source>
</evidence>
<evidence type="ECO:0000250" key="2">
    <source>
        <dbReference type="UniProtKB" id="Q9H3H1"/>
    </source>
</evidence>
<evidence type="ECO:0000255" key="3"/>
<evidence type="ECO:0000256" key="4">
    <source>
        <dbReference type="SAM" id="MobiDB-lite"/>
    </source>
</evidence>
<evidence type="ECO:0000269" key="5">
    <source>
    </source>
</evidence>
<evidence type="ECO:0000303" key="6">
    <source>
    </source>
</evidence>
<evidence type="ECO:0000303" key="7">
    <source>
    </source>
</evidence>
<evidence type="ECO:0000305" key="8"/>
<feature type="transit peptide" description="Mitochondrion" evidence="3">
    <location>
        <begin position="1"/>
        <end position="47"/>
    </location>
</feature>
<feature type="chain" id="PRO_0000019024" description="tRNA dimethylallyltransferase">
    <location>
        <begin position="48"/>
        <end position="467"/>
    </location>
</feature>
<feature type="zinc finger region" description="Matrin-type">
    <location>
        <begin position="395"/>
        <end position="425"/>
    </location>
</feature>
<feature type="region of interest" description="Interaction with substrate tRNA" evidence="1">
    <location>
        <begin position="55"/>
        <end position="58"/>
    </location>
</feature>
<feature type="region of interest" description="Interaction with substrate tRNA" evidence="1">
    <location>
        <begin position="183"/>
        <end position="187"/>
    </location>
</feature>
<feature type="region of interest" description="Core aggregation region" evidence="1">
    <location>
        <begin position="221"/>
        <end position="230"/>
    </location>
</feature>
<feature type="region of interest" description="Interaction with isopentenylpyrophosphate transferase" evidence="1">
    <location>
        <begin position="233"/>
        <end position="255"/>
    </location>
</feature>
<feature type="region of interest" description="Interaction with substrate tRNA" evidence="1">
    <location>
        <begin position="281"/>
        <end position="283"/>
    </location>
</feature>
<feature type="region of interest" description="Interaction with substrate tRNA" evidence="1">
    <location>
        <begin position="313"/>
        <end position="331"/>
    </location>
</feature>
<feature type="region of interest" description="Disordered" evidence="4">
    <location>
        <begin position="432"/>
        <end position="467"/>
    </location>
</feature>
<feature type="binding site" evidence="1">
    <location>
        <begin position="32"/>
        <end position="37"/>
    </location>
    <ligand>
        <name>dimethylallyl diphosphate</name>
        <dbReference type="ChEBI" id="CHEBI:57623"/>
    </ligand>
</feature>
<feature type="site" description="Interaction with substrate tRNA" evidence="1">
    <location>
        <position position="122"/>
    </location>
</feature>
<feature type="site" description="Interaction with substrate tRNA" evidence="1">
    <location>
        <position position="206"/>
    </location>
</feature>
<feature type="modified residue" description="Phosphoserine" evidence="2">
    <location>
        <position position="443"/>
    </location>
</feature>
<feature type="modified residue" description="Phosphoserine" evidence="2">
    <location>
        <position position="455"/>
    </location>
</feature>
<feature type="splice variant" id="VSP_010722" description="In isoform 2." evidence="6 7">
    <location>
        <begin position="1"/>
        <end position="141"/>
    </location>
</feature>
<feature type="mutagenesis site" description="Reduced tRNA dimethylallyltransferase activity." evidence="5">
    <original>T</original>
    <variation>A</variation>
    <location>
        <position position="32"/>
    </location>
</feature>
<feature type="mutagenesis site" description="Reduced tRNA dimethylallyltransferase activity." evidence="5">
    <original>D</original>
    <variation>G</variation>
    <location>
        <position position="55"/>
    </location>
</feature>
<feature type="sequence conflict" description="In Ref. 3; AAH51040." evidence="8" ref="3">
    <original>M</original>
    <variation>T</variation>
    <location>
        <position position="379"/>
    </location>
</feature>
<feature type="sequence conflict" description="In Ref. 3; AAH51040." evidence="8" ref="3">
    <original>A</original>
    <variation>T</variation>
    <location>
        <position position="384"/>
    </location>
</feature>
<comment type="function">
    <text evidence="2 5">Catalyzes the transfer of a dimethylallyl group onto the adenine at position 37 of both cytosolic and mitochondrial tRNAs, leading to the formation of N6-(dimethylallyl)adenosine (i6A37) (PubMed:23289710). Mediates modification of a limited subset of tRNAs: tRNA(Ser)(AGA), tRNA(Ser)(CGA), tRNA(Ser)(UGA), as well as partial modification of the selenocysteine tRNA(Ser)(UCA) (By similarity). TRIT1 is therefore required for selenoprotein expression (PubMed:23289710).</text>
</comment>
<comment type="catalytic activity">
    <reaction evidence="5">
        <text>adenosine(37) in tRNA + dimethylallyl diphosphate = N(6)-dimethylallyladenosine(37) in tRNA + diphosphate</text>
        <dbReference type="Rhea" id="RHEA:26482"/>
        <dbReference type="Rhea" id="RHEA-COMP:10162"/>
        <dbReference type="Rhea" id="RHEA-COMP:10375"/>
        <dbReference type="ChEBI" id="CHEBI:33019"/>
        <dbReference type="ChEBI" id="CHEBI:57623"/>
        <dbReference type="ChEBI" id="CHEBI:74411"/>
        <dbReference type="ChEBI" id="CHEBI:74415"/>
        <dbReference type="EC" id="2.5.1.75"/>
    </reaction>
</comment>
<comment type="subcellular location">
    <molecule>Isoform 1</molecule>
    <subcellularLocation>
        <location evidence="2">Mitochondrion</location>
    </subcellularLocation>
</comment>
<comment type="subcellular location">
    <molecule>Isoform 2</molecule>
    <subcellularLocation>
        <location evidence="8">Cytoplasm</location>
    </subcellularLocation>
    <subcellularLocation>
        <location evidence="8">Nucleus</location>
    </subcellularLocation>
</comment>
<comment type="alternative products">
    <event type="alternative splicing"/>
    <isoform>
        <id>Q80UN9-1</id>
        <name>1</name>
        <sequence type="displayed"/>
    </isoform>
    <isoform>
        <id>Q80UN9-2</id>
        <name>2</name>
        <sequence type="described" ref="VSP_010722"/>
    </isoform>
</comment>
<comment type="similarity">
    <text evidence="8">Belongs to the IPP transferase family.</text>
</comment>
<reference key="1">
    <citation type="journal article" date="2005" name="Science">
        <title>The transcriptional landscape of the mammalian genome.</title>
        <authorList>
            <person name="Carninci P."/>
            <person name="Kasukawa T."/>
            <person name="Katayama S."/>
            <person name="Gough J."/>
            <person name="Frith M.C."/>
            <person name="Maeda N."/>
            <person name="Oyama R."/>
            <person name="Ravasi T."/>
            <person name="Lenhard B."/>
            <person name="Wells C."/>
            <person name="Kodzius R."/>
            <person name="Shimokawa K."/>
            <person name="Bajic V.B."/>
            <person name="Brenner S.E."/>
            <person name="Batalov S."/>
            <person name="Forrest A.R."/>
            <person name="Zavolan M."/>
            <person name="Davis M.J."/>
            <person name="Wilming L.G."/>
            <person name="Aidinis V."/>
            <person name="Allen J.E."/>
            <person name="Ambesi-Impiombato A."/>
            <person name="Apweiler R."/>
            <person name="Aturaliya R.N."/>
            <person name="Bailey T.L."/>
            <person name="Bansal M."/>
            <person name="Baxter L."/>
            <person name="Beisel K.W."/>
            <person name="Bersano T."/>
            <person name="Bono H."/>
            <person name="Chalk A.M."/>
            <person name="Chiu K.P."/>
            <person name="Choudhary V."/>
            <person name="Christoffels A."/>
            <person name="Clutterbuck D.R."/>
            <person name="Crowe M.L."/>
            <person name="Dalla E."/>
            <person name="Dalrymple B.P."/>
            <person name="de Bono B."/>
            <person name="Della Gatta G."/>
            <person name="di Bernardo D."/>
            <person name="Down T."/>
            <person name="Engstrom P."/>
            <person name="Fagiolini M."/>
            <person name="Faulkner G."/>
            <person name="Fletcher C.F."/>
            <person name="Fukushima T."/>
            <person name="Furuno M."/>
            <person name="Futaki S."/>
            <person name="Gariboldi M."/>
            <person name="Georgii-Hemming P."/>
            <person name="Gingeras T.R."/>
            <person name="Gojobori T."/>
            <person name="Green R.E."/>
            <person name="Gustincich S."/>
            <person name="Harbers M."/>
            <person name="Hayashi Y."/>
            <person name="Hensch T.K."/>
            <person name="Hirokawa N."/>
            <person name="Hill D."/>
            <person name="Huminiecki L."/>
            <person name="Iacono M."/>
            <person name="Ikeo K."/>
            <person name="Iwama A."/>
            <person name="Ishikawa T."/>
            <person name="Jakt M."/>
            <person name="Kanapin A."/>
            <person name="Katoh M."/>
            <person name="Kawasawa Y."/>
            <person name="Kelso J."/>
            <person name="Kitamura H."/>
            <person name="Kitano H."/>
            <person name="Kollias G."/>
            <person name="Krishnan S.P."/>
            <person name="Kruger A."/>
            <person name="Kummerfeld S.K."/>
            <person name="Kurochkin I.V."/>
            <person name="Lareau L.F."/>
            <person name="Lazarevic D."/>
            <person name="Lipovich L."/>
            <person name="Liu J."/>
            <person name="Liuni S."/>
            <person name="McWilliam S."/>
            <person name="Madan Babu M."/>
            <person name="Madera M."/>
            <person name="Marchionni L."/>
            <person name="Matsuda H."/>
            <person name="Matsuzawa S."/>
            <person name="Miki H."/>
            <person name="Mignone F."/>
            <person name="Miyake S."/>
            <person name="Morris K."/>
            <person name="Mottagui-Tabar S."/>
            <person name="Mulder N."/>
            <person name="Nakano N."/>
            <person name="Nakauchi H."/>
            <person name="Ng P."/>
            <person name="Nilsson R."/>
            <person name="Nishiguchi S."/>
            <person name="Nishikawa S."/>
            <person name="Nori F."/>
            <person name="Ohara O."/>
            <person name="Okazaki Y."/>
            <person name="Orlando V."/>
            <person name="Pang K.C."/>
            <person name="Pavan W.J."/>
            <person name="Pavesi G."/>
            <person name="Pesole G."/>
            <person name="Petrovsky N."/>
            <person name="Piazza S."/>
            <person name="Reed J."/>
            <person name="Reid J.F."/>
            <person name="Ring B.Z."/>
            <person name="Ringwald M."/>
            <person name="Rost B."/>
            <person name="Ruan Y."/>
            <person name="Salzberg S.L."/>
            <person name="Sandelin A."/>
            <person name="Schneider C."/>
            <person name="Schoenbach C."/>
            <person name="Sekiguchi K."/>
            <person name="Semple C.A."/>
            <person name="Seno S."/>
            <person name="Sessa L."/>
            <person name="Sheng Y."/>
            <person name="Shibata Y."/>
            <person name="Shimada H."/>
            <person name="Shimada K."/>
            <person name="Silva D."/>
            <person name="Sinclair B."/>
            <person name="Sperling S."/>
            <person name="Stupka E."/>
            <person name="Sugiura K."/>
            <person name="Sultana R."/>
            <person name="Takenaka Y."/>
            <person name="Taki K."/>
            <person name="Tammoja K."/>
            <person name="Tan S.L."/>
            <person name="Tang S."/>
            <person name="Taylor M.S."/>
            <person name="Tegner J."/>
            <person name="Teichmann S.A."/>
            <person name="Ueda H.R."/>
            <person name="van Nimwegen E."/>
            <person name="Verardo R."/>
            <person name="Wei C.L."/>
            <person name="Yagi K."/>
            <person name="Yamanishi H."/>
            <person name="Zabarovsky E."/>
            <person name="Zhu S."/>
            <person name="Zimmer A."/>
            <person name="Hide W."/>
            <person name="Bult C."/>
            <person name="Grimmond S.M."/>
            <person name="Teasdale R.D."/>
            <person name="Liu E.T."/>
            <person name="Brusic V."/>
            <person name="Quackenbush J."/>
            <person name="Wahlestedt C."/>
            <person name="Mattick J.S."/>
            <person name="Hume D.A."/>
            <person name="Kai C."/>
            <person name="Sasaki D."/>
            <person name="Tomaru Y."/>
            <person name="Fukuda S."/>
            <person name="Kanamori-Katayama M."/>
            <person name="Suzuki M."/>
            <person name="Aoki J."/>
            <person name="Arakawa T."/>
            <person name="Iida J."/>
            <person name="Imamura K."/>
            <person name="Itoh M."/>
            <person name="Kato T."/>
            <person name="Kawaji H."/>
            <person name="Kawagashira N."/>
            <person name="Kawashima T."/>
            <person name="Kojima M."/>
            <person name="Kondo S."/>
            <person name="Konno H."/>
            <person name="Nakano K."/>
            <person name="Ninomiya N."/>
            <person name="Nishio T."/>
            <person name="Okada M."/>
            <person name="Plessy C."/>
            <person name="Shibata K."/>
            <person name="Shiraki T."/>
            <person name="Suzuki S."/>
            <person name="Tagami M."/>
            <person name="Waki K."/>
            <person name="Watahiki A."/>
            <person name="Okamura-Oho Y."/>
            <person name="Suzuki H."/>
            <person name="Kawai J."/>
            <person name="Hayashizaki Y."/>
        </authorList>
    </citation>
    <scope>NUCLEOTIDE SEQUENCE [LARGE SCALE MRNA] (ISOFORM 2)</scope>
    <source>
        <strain>C57BL/6J</strain>
        <tissue>Embryo</tissue>
    </source>
</reference>
<reference key="2">
    <citation type="journal article" date="2009" name="PLoS Biol.">
        <title>Lineage-specific biology revealed by a finished genome assembly of the mouse.</title>
        <authorList>
            <person name="Church D.M."/>
            <person name="Goodstadt L."/>
            <person name="Hillier L.W."/>
            <person name="Zody M.C."/>
            <person name="Goldstein S."/>
            <person name="She X."/>
            <person name="Bult C.J."/>
            <person name="Agarwala R."/>
            <person name="Cherry J.L."/>
            <person name="DiCuccio M."/>
            <person name="Hlavina W."/>
            <person name="Kapustin Y."/>
            <person name="Meric P."/>
            <person name="Maglott D."/>
            <person name="Birtle Z."/>
            <person name="Marques A.C."/>
            <person name="Graves T."/>
            <person name="Zhou S."/>
            <person name="Teague B."/>
            <person name="Potamousis K."/>
            <person name="Churas C."/>
            <person name="Place M."/>
            <person name="Herschleb J."/>
            <person name="Runnheim R."/>
            <person name="Forrest D."/>
            <person name="Amos-Landgraf J."/>
            <person name="Schwartz D.C."/>
            <person name="Cheng Z."/>
            <person name="Lindblad-Toh K."/>
            <person name="Eichler E.E."/>
            <person name="Ponting C.P."/>
        </authorList>
    </citation>
    <scope>NUCLEOTIDE SEQUENCE [LARGE SCALE GENOMIC DNA]</scope>
    <source>
        <strain>C57BL/6J</strain>
    </source>
</reference>
<reference key="3">
    <citation type="journal article" date="2004" name="Genome Res.">
        <title>The status, quality, and expansion of the NIH full-length cDNA project: the Mammalian Gene Collection (MGC).</title>
        <authorList>
            <consortium name="The MGC Project Team"/>
        </authorList>
    </citation>
    <scope>NUCLEOTIDE SEQUENCE [LARGE SCALE MRNA] (ISOFORMS 1 AND 2)</scope>
    <source>
        <strain>Czech II</strain>
        <tissue>Kidney</tissue>
        <tissue>Mammary tumor</tissue>
    </source>
</reference>
<reference key="4">
    <citation type="journal article" date="2013" name="Biochem. J.">
        <title>Mammalian Trit1 is a tRNA([Ser]Sec)-isopentenyl transferase required for full selenoprotein expression.</title>
        <authorList>
            <person name="Fradejas N."/>
            <person name="Carlson B.A."/>
            <person name="Rijntjes E."/>
            <person name="Becker N.P."/>
            <person name="Tobe R."/>
            <person name="Schweizer U."/>
        </authorList>
    </citation>
    <scope>FUNCTION</scope>
    <scope>CATALYTIC ACTIVITY</scope>
    <scope>MUTAGENESIS OF THR-32 AND ASP-55</scope>
</reference>
<protein>
    <recommendedName>
        <fullName>tRNA dimethylallyltransferase</fullName>
        <ecNumber evidence="2">2.5.1.75</ecNumber>
    </recommendedName>
    <alternativeName>
        <fullName>Isopentenyl-diphosphate:tRNA isopentenyltransferase</fullName>
        <shortName>IPP transferase</shortName>
        <shortName>IPPT</shortName>
    </alternativeName>
    <alternativeName>
        <fullName>tRNA isopentenyltransferase</fullName>
        <shortName>IPTase</shortName>
    </alternativeName>
</protein>
<name>MOD5_MOUSE</name>
<sequence length="467" mass="52437">MAAAAAARAVPVSSGFRGLRRTLPLVVILGATGTGKSTLALQLGQRLGGEIVSADSMQVYEGLDIITNKVSAQEQKMCQHHMISFVDPLVTSYTVVDFRNKATALIEDIFARDKIPIVVGGTNYYIESLLWKVLITTKPQEMGTGKVVDRKVELEKEDGHELHKRLSQVDPEMAAKLHPHDKRKVARSLQVFEETGISHSEFLHRQHAEEGGGPLGGPLRFPNPCILWLHADQAVLDERLDKRVDDMLAAGLLEELRGFHRRYNLKNISENSQDYQHGIFQSIGFKEFHEYLTTEGKCTPETSNQLLKKGIEALKQVTKRYARKQNRWVKNRFLSRPGPSVPPVYGLEVSDVSKWEESVLEPALNIVQSFIQGHKPTAMPVKMAYNESENKRSYHMCDLCDRIIIGDREWAAHLKSKSHLHQLKKRRRLDLDAVSATGSQSNSPDCDPERIEGESSGQHNQELKASV</sequence>
<proteinExistence type="evidence at protein level"/>
<keyword id="KW-0025">Alternative splicing</keyword>
<keyword id="KW-0067">ATP-binding</keyword>
<keyword id="KW-0963">Cytoplasm</keyword>
<keyword id="KW-0479">Metal-binding</keyword>
<keyword id="KW-0496">Mitochondrion</keyword>
<keyword id="KW-0547">Nucleotide-binding</keyword>
<keyword id="KW-0539">Nucleus</keyword>
<keyword id="KW-0597">Phosphoprotein</keyword>
<keyword id="KW-1185">Reference proteome</keyword>
<keyword id="KW-0808">Transferase</keyword>
<keyword id="KW-0809">Transit peptide</keyword>
<keyword id="KW-0819">tRNA processing</keyword>
<keyword id="KW-0862">Zinc</keyword>
<keyword id="KW-0863">Zinc-finger</keyword>